<gene>
    <name type="primary">Plb1</name>
    <name type="synonym">Plb</name>
</gene>
<reference key="1">
    <citation type="journal article" date="2005" name="Science">
        <title>The transcriptional landscape of the mammalian genome.</title>
        <authorList>
            <person name="Carninci P."/>
            <person name="Kasukawa T."/>
            <person name="Katayama S."/>
            <person name="Gough J."/>
            <person name="Frith M.C."/>
            <person name="Maeda N."/>
            <person name="Oyama R."/>
            <person name="Ravasi T."/>
            <person name="Lenhard B."/>
            <person name="Wells C."/>
            <person name="Kodzius R."/>
            <person name="Shimokawa K."/>
            <person name="Bajic V.B."/>
            <person name="Brenner S.E."/>
            <person name="Batalov S."/>
            <person name="Forrest A.R."/>
            <person name="Zavolan M."/>
            <person name="Davis M.J."/>
            <person name="Wilming L.G."/>
            <person name="Aidinis V."/>
            <person name="Allen J.E."/>
            <person name="Ambesi-Impiombato A."/>
            <person name="Apweiler R."/>
            <person name="Aturaliya R.N."/>
            <person name="Bailey T.L."/>
            <person name="Bansal M."/>
            <person name="Baxter L."/>
            <person name="Beisel K.W."/>
            <person name="Bersano T."/>
            <person name="Bono H."/>
            <person name="Chalk A.M."/>
            <person name="Chiu K.P."/>
            <person name="Choudhary V."/>
            <person name="Christoffels A."/>
            <person name="Clutterbuck D.R."/>
            <person name="Crowe M.L."/>
            <person name="Dalla E."/>
            <person name="Dalrymple B.P."/>
            <person name="de Bono B."/>
            <person name="Della Gatta G."/>
            <person name="di Bernardo D."/>
            <person name="Down T."/>
            <person name="Engstrom P."/>
            <person name="Fagiolini M."/>
            <person name="Faulkner G."/>
            <person name="Fletcher C.F."/>
            <person name="Fukushima T."/>
            <person name="Furuno M."/>
            <person name="Futaki S."/>
            <person name="Gariboldi M."/>
            <person name="Georgii-Hemming P."/>
            <person name="Gingeras T.R."/>
            <person name="Gojobori T."/>
            <person name="Green R.E."/>
            <person name="Gustincich S."/>
            <person name="Harbers M."/>
            <person name="Hayashi Y."/>
            <person name="Hensch T.K."/>
            <person name="Hirokawa N."/>
            <person name="Hill D."/>
            <person name="Huminiecki L."/>
            <person name="Iacono M."/>
            <person name="Ikeo K."/>
            <person name="Iwama A."/>
            <person name="Ishikawa T."/>
            <person name="Jakt M."/>
            <person name="Kanapin A."/>
            <person name="Katoh M."/>
            <person name="Kawasawa Y."/>
            <person name="Kelso J."/>
            <person name="Kitamura H."/>
            <person name="Kitano H."/>
            <person name="Kollias G."/>
            <person name="Krishnan S.P."/>
            <person name="Kruger A."/>
            <person name="Kummerfeld S.K."/>
            <person name="Kurochkin I.V."/>
            <person name="Lareau L.F."/>
            <person name="Lazarevic D."/>
            <person name="Lipovich L."/>
            <person name="Liu J."/>
            <person name="Liuni S."/>
            <person name="McWilliam S."/>
            <person name="Madan Babu M."/>
            <person name="Madera M."/>
            <person name="Marchionni L."/>
            <person name="Matsuda H."/>
            <person name="Matsuzawa S."/>
            <person name="Miki H."/>
            <person name="Mignone F."/>
            <person name="Miyake S."/>
            <person name="Morris K."/>
            <person name="Mottagui-Tabar S."/>
            <person name="Mulder N."/>
            <person name="Nakano N."/>
            <person name="Nakauchi H."/>
            <person name="Ng P."/>
            <person name="Nilsson R."/>
            <person name="Nishiguchi S."/>
            <person name="Nishikawa S."/>
            <person name="Nori F."/>
            <person name="Ohara O."/>
            <person name="Okazaki Y."/>
            <person name="Orlando V."/>
            <person name="Pang K.C."/>
            <person name="Pavan W.J."/>
            <person name="Pavesi G."/>
            <person name="Pesole G."/>
            <person name="Petrovsky N."/>
            <person name="Piazza S."/>
            <person name="Reed J."/>
            <person name="Reid J.F."/>
            <person name="Ring B.Z."/>
            <person name="Ringwald M."/>
            <person name="Rost B."/>
            <person name="Ruan Y."/>
            <person name="Salzberg S.L."/>
            <person name="Sandelin A."/>
            <person name="Schneider C."/>
            <person name="Schoenbach C."/>
            <person name="Sekiguchi K."/>
            <person name="Semple C.A."/>
            <person name="Seno S."/>
            <person name="Sessa L."/>
            <person name="Sheng Y."/>
            <person name="Shibata Y."/>
            <person name="Shimada H."/>
            <person name="Shimada K."/>
            <person name="Silva D."/>
            <person name="Sinclair B."/>
            <person name="Sperling S."/>
            <person name="Stupka E."/>
            <person name="Sugiura K."/>
            <person name="Sultana R."/>
            <person name="Takenaka Y."/>
            <person name="Taki K."/>
            <person name="Tammoja K."/>
            <person name="Tan S.L."/>
            <person name="Tang S."/>
            <person name="Taylor M.S."/>
            <person name="Tegner J."/>
            <person name="Teichmann S.A."/>
            <person name="Ueda H.R."/>
            <person name="van Nimwegen E."/>
            <person name="Verardo R."/>
            <person name="Wei C.L."/>
            <person name="Yagi K."/>
            <person name="Yamanishi H."/>
            <person name="Zabarovsky E."/>
            <person name="Zhu S."/>
            <person name="Zimmer A."/>
            <person name="Hide W."/>
            <person name="Bult C."/>
            <person name="Grimmond S.M."/>
            <person name="Teasdale R.D."/>
            <person name="Liu E.T."/>
            <person name="Brusic V."/>
            <person name="Quackenbush J."/>
            <person name="Wahlestedt C."/>
            <person name="Mattick J.S."/>
            <person name="Hume D.A."/>
            <person name="Kai C."/>
            <person name="Sasaki D."/>
            <person name="Tomaru Y."/>
            <person name="Fukuda S."/>
            <person name="Kanamori-Katayama M."/>
            <person name="Suzuki M."/>
            <person name="Aoki J."/>
            <person name="Arakawa T."/>
            <person name="Iida J."/>
            <person name="Imamura K."/>
            <person name="Itoh M."/>
            <person name="Kato T."/>
            <person name="Kawaji H."/>
            <person name="Kawagashira N."/>
            <person name="Kawashima T."/>
            <person name="Kojima M."/>
            <person name="Kondo S."/>
            <person name="Konno H."/>
            <person name="Nakano K."/>
            <person name="Ninomiya N."/>
            <person name="Nishio T."/>
            <person name="Okada M."/>
            <person name="Plessy C."/>
            <person name="Shibata K."/>
            <person name="Shiraki T."/>
            <person name="Suzuki S."/>
            <person name="Tagami M."/>
            <person name="Waki K."/>
            <person name="Watahiki A."/>
            <person name="Okamura-Oho Y."/>
            <person name="Suzuki H."/>
            <person name="Kawai J."/>
            <person name="Hayashizaki Y."/>
        </authorList>
    </citation>
    <scope>NUCLEOTIDE SEQUENCE [LARGE SCALE MRNA] (ISOFORMS 2 AND 4)</scope>
    <source>
        <strain>C57BL/6J</strain>
        <tissue>Skin</tissue>
        <tissue>Testis</tissue>
    </source>
</reference>
<reference key="2">
    <citation type="journal article" date="2009" name="PLoS Biol.">
        <title>Lineage-specific biology revealed by a finished genome assembly of the mouse.</title>
        <authorList>
            <person name="Church D.M."/>
            <person name="Goodstadt L."/>
            <person name="Hillier L.W."/>
            <person name="Zody M.C."/>
            <person name="Goldstein S."/>
            <person name="She X."/>
            <person name="Bult C.J."/>
            <person name="Agarwala R."/>
            <person name="Cherry J.L."/>
            <person name="DiCuccio M."/>
            <person name="Hlavina W."/>
            <person name="Kapustin Y."/>
            <person name="Meric P."/>
            <person name="Maglott D."/>
            <person name="Birtle Z."/>
            <person name="Marques A.C."/>
            <person name="Graves T."/>
            <person name="Zhou S."/>
            <person name="Teague B."/>
            <person name="Potamousis K."/>
            <person name="Churas C."/>
            <person name="Place M."/>
            <person name="Herschleb J."/>
            <person name="Runnheim R."/>
            <person name="Forrest D."/>
            <person name="Amos-Landgraf J."/>
            <person name="Schwartz D.C."/>
            <person name="Cheng Z."/>
            <person name="Lindblad-Toh K."/>
            <person name="Eichler E.E."/>
            <person name="Ponting C.P."/>
        </authorList>
    </citation>
    <scope>NUCLEOTIDE SEQUENCE [LARGE SCALE GENOMIC DNA]</scope>
    <source>
        <strain>C57BL/6J</strain>
    </source>
</reference>
<reference key="3">
    <citation type="journal article" date="2004" name="Genome Res.">
        <title>The status, quality, and expansion of the NIH full-length cDNA project: the Mammalian Gene Collection (MGC).</title>
        <authorList>
            <consortium name="The MGC Project Team"/>
        </authorList>
    </citation>
    <scope>NUCLEOTIDE SEQUENCE [LARGE SCALE MRNA] OF 90-1478 (ISOFORM 3)</scope>
    <source>
        <tissue>Testis</tissue>
    </source>
</reference>
<reference key="4">
    <citation type="journal article" date="2010" name="Cell">
        <title>A tissue-specific atlas of mouse protein phosphorylation and expression.</title>
        <authorList>
            <person name="Huttlin E.L."/>
            <person name="Jedrychowski M.P."/>
            <person name="Elias J.E."/>
            <person name="Goswami T."/>
            <person name="Rad R."/>
            <person name="Beausoleil S.A."/>
            <person name="Villen J."/>
            <person name="Haas W."/>
            <person name="Sowa M.E."/>
            <person name="Gygi S.P."/>
        </authorList>
    </citation>
    <scope>IDENTIFICATION BY MASS SPECTROMETRY [LARGE SCALE ANALYSIS]</scope>
    <source>
        <tissue>Testis</tissue>
    </source>
</reference>
<accession>Q3TTY0</accession>
<accession>Q0VEX7</accession>
<accession>Q9D4Y6</accession>
<protein>
    <recommendedName>
        <fullName>Phospholipase B1, membrane-associated</fullName>
        <shortName>Phospholipase B</shortName>
    </recommendedName>
    <alternativeName>
        <fullName>Lysophospholipase</fullName>
        <ecNumber evidence="1">3.1.1.5</ecNumber>
    </alternativeName>
    <alternativeName>
        <fullName>Phospholipase A2</fullName>
        <ecNumber evidence="1">3.1.1.4</ecNumber>
    </alternativeName>
    <alternativeName>
        <fullName>Phospholipase B/lipase</fullName>
        <shortName>PLB/LIP</shortName>
    </alternativeName>
    <alternativeName>
        <fullName>Triacylglycerol lipase</fullName>
        <ecNumber evidence="1">3.1.1.3</ecNumber>
    </alternativeName>
</protein>
<proteinExistence type="evidence at protein level"/>
<dbReference type="EC" id="3.1.1.5" evidence="1"/>
<dbReference type="EC" id="3.1.1.4" evidence="1"/>
<dbReference type="EC" id="3.1.1.3" evidence="1"/>
<dbReference type="EMBL" id="AK015993">
    <property type="protein sequence ID" value="BAB30072.1"/>
    <property type="molecule type" value="mRNA"/>
</dbReference>
<dbReference type="EMBL" id="AK161095">
    <property type="protein sequence ID" value="BAE36193.1"/>
    <property type="molecule type" value="mRNA"/>
</dbReference>
<dbReference type="EMBL" id="AC102372">
    <property type="status" value="NOT_ANNOTATED_CDS"/>
    <property type="molecule type" value="Genomic_DNA"/>
</dbReference>
<dbReference type="EMBL" id="AC111030">
    <property type="status" value="NOT_ANNOTATED_CDS"/>
    <property type="molecule type" value="Genomic_DNA"/>
</dbReference>
<dbReference type="EMBL" id="BC119077">
    <property type="protein sequence ID" value="AAI19078.1"/>
    <property type="status" value="ALT_INIT"/>
    <property type="molecule type" value="mRNA"/>
</dbReference>
<dbReference type="CCDS" id="CCDS39060.1">
    <molecule id="Q3TTY0-1"/>
</dbReference>
<dbReference type="RefSeq" id="NP_001074876.1">
    <molecule id="Q3TTY0-1"/>
    <property type="nucleotide sequence ID" value="NM_001081407.1"/>
</dbReference>
<dbReference type="RefSeq" id="NP_084348.1">
    <property type="nucleotide sequence ID" value="NM_030072.1"/>
</dbReference>
<dbReference type="RefSeq" id="XP_006504110.1">
    <molecule id="Q3TTY0-1"/>
    <property type="nucleotide sequence ID" value="XM_006504047.2"/>
</dbReference>
<dbReference type="BioGRID" id="577132">
    <property type="interactions" value="1"/>
</dbReference>
<dbReference type="FunCoup" id="Q3TTY0">
    <property type="interactions" value="213"/>
</dbReference>
<dbReference type="STRING" id="10090.ENSMUSP00000144040"/>
<dbReference type="GlyCosmos" id="Q3TTY0">
    <property type="glycosylation" value="14 sites, No reported glycans"/>
</dbReference>
<dbReference type="GlyGen" id="Q3TTY0">
    <property type="glycosylation" value="14 sites"/>
</dbReference>
<dbReference type="iPTMnet" id="Q3TTY0"/>
<dbReference type="PhosphoSitePlus" id="Q3TTY0"/>
<dbReference type="SwissPalm" id="Q3TTY0"/>
<dbReference type="jPOST" id="Q3TTY0"/>
<dbReference type="PaxDb" id="10090-ENSMUSP00000098928"/>
<dbReference type="ProteomicsDB" id="289521">
    <molecule id="Q3TTY0-1"/>
</dbReference>
<dbReference type="ProteomicsDB" id="289522">
    <molecule id="Q3TTY0-2"/>
</dbReference>
<dbReference type="ProteomicsDB" id="289523">
    <molecule id="Q3TTY0-3"/>
</dbReference>
<dbReference type="ProteomicsDB" id="289524">
    <molecule id="Q3TTY0-4"/>
</dbReference>
<dbReference type="Antibodypedia" id="2675">
    <property type="antibodies" value="129 antibodies from 14 providers"/>
</dbReference>
<dbReference type="DNASU" id="665270"/>
<dbReference type="Ensembl" id="ENSMUST00000101376.3">
    <molecule id="Q3TTY0-1"/>
    <property type="protein sequence ID" value="ENSMUSP00000098927.3"/>
    <property type="gene ID" value="ENSMUSG00000029134.15"/>
</dbReference>
<dbReference type="Ensembl" id="ENSMUST00000202201.4">
    <molecule id="Q3TTY0-2"/>
    <property type="protein sequence ID" value="ENSMUSP00000144401.2"/>
    <property type="gene ID" value="ENSMUSG00000029134.15"/>
</dbReference>
<dbReference type="Ensembl" id="ENSMUST00000202220.4">
    <molecule id="Q3TTY0-1"/>
    <property type="protein sequence ID" value="ENSMUSP00000144040.2"/>
    <property type="gene ID" value="ENSMUSG00000029134.15"/>
</dbReference>
<dbReference type="GeneID" id="665270"/>
<dbReference type="KEGG" id="mmu:665270"/>
<dbReference type="UCSC" id="uc008wzk.1">
    <molecule id="Q3TTY0-4"/>
    <property type="organism name" value="mouse"/>
</dbReference>
<dbReference type="UCSC" id="uc008wzl.1">
    <molecule id="Q3TTY0-3"/>
    <property type="organism name" value="mouse"/>
</dbReference>
<dbReference type="UCSC" id="uc008wzm.1">
    <molecule id="Q3TTY0-2"/>
    <property type="organism name" value="mouse"/>
</dbReference>
<dbReference type="UCSC" id="uc008wzn.1">
    <molecule id="Q3TTY0-1"/>
    <property type="organism name" value="mouse"/>
</dbReference>
<dbReference type="AGR" id="MGI:1922406"/>
<dbReference type="CTD" id="151056"/>
<dbReference type="MGI" id="MGI:1922406">
    <property type="gene designation" value="Plb1"/>
</dbReference>
<dbReference type="VEuPathDB" id="HostDB:ENSMUSG00000029134"/>
<dbReference type="eggNOG" id="KOG3670">
    <property type="taxonomic scope" value="Eukaryota"/>
</dbReference>
<dbReference type="GeneTree" id="ENSGT00530000063883"/>
<dbReference type="InParanoid" id="Q3TTY0"/>
<dbReference type="OMA" id="KYMQRED"/>
<dbReference type="OrthoDB" id="10265800at2759"/>
<dbReference type="PhylomeDB" id="Q3TTY0"/>
<dbReference type="TreeFam" id="TF314942"/>
<dbReference type="BRENDA" id="3.1.1.5">
    <property type="organism ID" value="3474"/>
</dbReference>
<dbReference type="Reactome" id="R-MMU-1482788">
    <property type="pathway name" value="Acyl chain remodelling of PC"/>
</dbReference>
<dbReference type="Reactome" id="R-MMU-975634">
    <property type="pathway name" value="Retinoid metabolism and transport"/>
</dbReference>
<dbReference type="BioGRID-ORCS" id="665270">
    <property type="hits" value="1 hit in 79 CRISPR screens"/>
</dbReference>
<dbReference type="ChiTaRS" id="Pln">
    <property type="organism name" value="mouse"/>
</dbReference>
<dbReference type="PRO" id="PR:Q3TTY0"/>
<dbReference type="Proteomes" id="UP000000589">
    <property type="component" value="Chromosome 5"/>
</dbReference>
<dbReference type="RNAct" id="Q3TTY0">
    <property type="molecule type" value="protein"/>
</dbReference>
<dbReference type="Bgee" id="ENSMUSG00000029134">
    <property type="expression patterns" value="Expressed in spermatid and 75 other cell types or tissues"/>
</dbReference>
<dbReference type="GO" id="GO:0016324">
    <property type="term" value="C:apical plasma membrane"/>
    <property type="evidence" value="ECO:0007669"/>
    <property type="project" value="UniProtKB-SubCell"/>
</dbReference>
<dbReference type="GO" id="GO:0031526">
    <property type="term" value="C:brush border membrane"/>
    <property type="evidence" value="ECO:0007669"/>
    <property type="project" value="Ensembl"/>
</dbReference>
<dbReference type="GO" id="GO:0047499">
    <property type="term" value="F:calcium-independent phospholipase A2 activity"/>
    <property type="evidence" value="ECO:0007669"/>
    <property type="project" value="Ensembl"/>
</dbReference>
<dbReference type="GO" id="GO:0004622">
    <property type="term" value="F:lysophospholipase activity"/>
    <property type="evidence" value="ECO:0007669"/>
    <property type="project" value="UniProtKB-EC"/>
</dbReference>
<dbReference type="GO" id="GO:0050253">
    <property type="term" value="F:retinyl-palmitate esterase activity"/>
    <property type="evidence" value="ECO:0007669"/>
    <property type="project" value="Ensembl"/>
</dbReference>
<dbReference type="GO" id="GO:0004806">
    <property type="term" value="F:triacylglycerol lipase activity"/>
    <property type="evidence" value="ECO:0007669"/>
    <property type="project" value="UniProtKB-EC"/>
</dbReference>
<dbReference type="GO" id="GO:0046340">
    <property type="term" value="P:diacylglycerol catabolic process"/>
    <property type="evidence" value="ECO:0007669"/>
    <property type="project" value="Ensembl"/>
</dbReference>
<dbReference type="GO" id="GO:0034638">
    <property type="term" value="P:phosphatidylcholine catabolic process"/>
    <property type="evidence" value="ECO:0007669"/>
    <property type="project" value="Ensembl"/>
</dbReference>
<dbReference type="GO" id="GO:0046338">
    <property type="term" value="P:phosphatidylethanolamine catabolic process"/>
    <property type="evidence" value="ECO:0007669"/>
    <property type="project" value="Ensembl"/>
</dbReference>
<dbReference type="GO" id="GO:0034478">
    <property type="term" value="P:phosphatidylglycerol catabolic process"/>
    <property type="evidence" value="ECO:0007669"/>
    <property type="project" value="Ensembl"/>
</dbReference>
<dbReference type="GO" id="GO:2000344">
    <property type="term" value="P:positive regulation of acrosome reaction"/>
    <property type="evidence" value="ECO:0000315"/>
    <property type="project" value="MGI"/>
</dbReference>
<dbReference type="GO" id="GO:0019433">
    <property type="term" value="P:triglyceride catabolic process"/>
    <property type="evidence" value="ECO:0007669"/>
    <property type="project" value="Ensembl"/>
</dbReference>
<dbReference type="CDD" id="cd01824">
    <property type="entry name" value="Phospholipase_B_like"/>
    <property type="match status" value="4"/>
</dbReference>
<dbReference type="FunFam" id="3.40.50.1110:FF:000005">
    <property type="entry name" value="Phospholipase B1"/>
    <property type="match status" value="1"/>
</dbReference>
<dbReference type="Gene3D" id="3.40.50.1110">
    <property type="entry name" value="SGNH hydrolase"/>
    <property type="match status" value="2"/>
</dbReference>
<dbReference type="InterPro" id="IPR001087">
    <property type="entry name" value="GDSL"/>
</dbReference>
<dbReference type="InterPro" id="IPR008265">
    <property type="entry name" value="Lipase_GDSL_AS"/>
</dbReference>
<dbReference type="InterPro" id="IPR035547">
    <property type="entry name" value="Phospholipase_B"/>
</dbReference>
<dbReference type="InterPro" id="IPR038885">
    <property type="entry name" value="PLB1"/>
</dbReference>
<dbReference type="InterPro" id="IPR036514">
    <property type="entry name" value="SGNH_hydro_sf"/>
</dbReference>
<dbReference type="PANTHER" id="PTHR21325">
    <property type="entry name" value="PHOSPHOLIPASE B, PLB1"/>
    <property type="match status" value="1"/>
</dbReference>
<dbReference type="PANTHER" id="PTHR21325:SF52">
    <property type="entry name" value="PHOSPHOLIPASE B1, MEMBRANE-ASSOCIATED"/>
    <property type="match status" value="1"/>
</dbReference>
<dbReference type="Pfam" id="PF00657">
    <property type="entry name" value="Lipase_GDSL"/>
    <property type="match status" value="3"/>
</dbReference>
<dbReference type="SUPFAM" id="SSF52266">
    <property type="entry name" value="SGNH hydrolase"/>
    <property type="match status" value="3"/>
</dbReference>
<dbReference type="PROSITE" id="PS01098">
    <property type="entry name" value="LIPASE_GDSL_SER"/>
    <property type="match status" value="2"/>
</dbReference>
<comment type="function">
    <text evidence="1 2">Calcium-independent membrane-associated phospholipase that catalyzes complete diacylation of phospholipids by hydrolyzing both sn-1 and sn-2 fatty acyl chains attached to the glycerol backbone (phospholipase B activity) (By similarity). Has dual phospholipase and lysophospholipase activities toward diacylphospholipids. Preferentially cleaves sn-2 ester bonds over sn-1 bonds. Acts as a lipase toward glycerolipid substrates (By similarity). Hydrolyzes fatty acyl chains of diacylglycerols with preference for the sn-2 position and of triacylglycerols with not positional selectivity (By similarity). May also hydrolyze long chain retinyl esters such as retinyl palmitate (By similarity). May contribute to digestion of dietary phospholipids, glycerolipids and retinoids, facilitating lipid absorption at the brush border (By similarity).</text>
</comment>
<comment type="catalytic activity">
    <reaction evidence="1">
        <text>a 1,2-diacyl-sn-glycero-3-phosphocholine + H2O = a 1-acyl-sn-glycero-3-phosphocholine + a fatty acid + H(+)</text>
        <dbReference type="Rhea" id="RHEA:15801"/>
        <dbReference type="ChEBI" id="CHEBI:15377"/>
        <dbReference type="ChEBI" id="CHEBI:15378"/>
        <dbReference type="ChEBI" id="CHEBI:28868"/>
        <dbReference type="ChEBI" id="CHEBI:57643"/>
        <dbReference type="ChEBI" id="CHEBI:58168"/>
        <dbReference type="EC" id="3.1.1.4"/>
    </reaction>
    <physiologicalReaction direction="left-to-right" evidence="1">
        <dbReference type="Rhea" id="RHEA:15802"/>
    </physiologicalReaction>
</comment>
<comment type="catalytic activity">
    <reaction evidence="1">
        <text>a 1-O-alkyl-2-acyl-sn-glycero-3-phosphocholine + H2O = a 1-O-alkyl-sn-glycero-3-phosphocholine + a fatty acid + H(+)</text>
        <dbReference type="Rhea" id="RHEA:36231"/>
        <dbReference type="ChEBI" id="CHEBI:15377"/>
        <dbReference type="ChEBI" id="CHEBI:15378"/>
        <dbReference type="ChEBI" id="CHEBI:28868"/>
        <dbReference type="ChEBI" id="CHEBI:30909"/>
        <dbReference type="ChEBI" id="CHEBI:36702"/>
        <dbReference type="EC" id="3.1.1.4"/>
    </reaction>
    <physiologicalReaction direction="left-to-right" evidence="1">
        <dbReference type="Rhea" id="RHEA:36232"/>
    </physiologicalReaction>
</comment>
<comment type="catalytic activity">
    <reaction evidence="1">
        <text>a 1-acyl-sn-glycero-3-phosphocholine + H2O = sn-glycerol 3-phosphocholine + a fatty acid + H(+)</text>
        <dbReference type="Rhea" id="RHEA:15177"/>
        <dbReference type="ChEBI" id="CHEBI:15377"/>
        <dbReference type="ChEBI" id="CHEBI:15378"/>
        <dbReference type="ChEBI" id="CHEBI:16870"/>
        <dbReference type="ChEBI" id="CHEBI:28868"/>
        <dbReference type="ChEBI" id="CHEBI:58168"/>
        <dbReference type="EC" id="3.1.1.5"/>
    </reaction>
    <physiologicalReaction direction="left-to-right" evidence="1">
        <dbReference type="Rhea" id="RHEA:15178"/>
    </physiologicalReaction>
</comment>
<comment type="catalytic activity">
    <reaction evidence="1">
        <text>a triacylglycerol + H2O = a diacylglycerol + a fatty acid + H(+)</text>
        <dbReference type="Rhea" id="RHEA:12044"/>
        <dbReference type="ChEBI" id="CHEBI:15377"/>
        <dbReference type="ChEBI" id="CHEBI:15378"/>
        <dbReference type="ChEBI" id="CHEBI:17855"/>
        <dbReference type="ChEBI" id="CHEBI:18035"/>
        <dbReference type="ChEBI" id="CHEBI:28868"/>
        <dbReference type="EC" id="3.1.1.3"/>
    </reaction>
    <physiologicalReaction direction="left-to-right" evidence="1">
        <dbReference type="Rhea" id="RHEA:12045"/>
    </physiologicalReaction>
</comment>
<comment type="catalytic activity">
    <reaction evidence="1">
        <text>1,2-dihexadecanoyl-sn-glycero-3-phosphocholine + H2O = 1-hexadecanoyl-sn-glycero-3-phosphocholine + hexadecanoate + H(+)</text>
        <dbReference type="Rhea" id="RHEA:41223"/>
        <dbReference type="ChEBI" id="CHEBI:7896"/>
        <dbReference type="ChEBI" id="CHEBI:15377"/>
        <dbReference type="ChEBI" id="CHEBI:15378"/>
        <dbReference type="ChEBI" id="CHEBI:72998"/>
        <dbReference type="ChEBI" id="CHEBI:72999"/>
    </reaction>
    <physiologicalReaction direction="left-to-right" evidence="1">
        <dbReference type="Rhea" id="RHEA:41224"/>
    </physiologicalReaction>
</comment>
<comment type="catalytic activity">
    <reaction evidence="1">
        <text>1-hexadecanoyl-2-(9Z-octadecenoyl)-sn-glycero-3-phosphocholine + H2O = 1-hexadecanoyl-sn-glycero-3-phosphocholine + (9Z)-octadecenoate + H(+)</text>
        <dbReference type="Rhea" id="RHEA:38779"/>
        <dbReference type="ChEBI" id="CHEBI:15377"/>
        <dbReference type="ChEBI" id="CHEBI:15378"/>
        <dbReference type="ChEBI" id="CHEBI:30823"/>
        <dbReference type="ChEBI" id="CHEBI:72998"/>
        <dbReference type="ChEBI" id="CHEBI:73001"/>
    </reaction>
    <physiologicalReaction direction="left-to-right" evidence="1">
        <dbReference type="Rhea" id="RHEA:38780"/>
    </physiologicalReaction>
</comment>
<comment type="catalytic activity">
    <reaction evidence="1">
        <text>1,2-di-(9Z-octadecenoyl)-sn-glycero-3-phosphocholine + H2O = 1-(9Z-octadecenoyl)-sn-glycero-3-phosphocholine + (9Z)-octadecenoate + H(+)</text>
        <dbReference type="Rhea" id="RHEA:40923"/>
        <dbReference type="ChEBI" id="CHEBI:15377"/>
        <dbReference type="ChEBI" id="CHEBI:15378"/>
        <dbReference type="ChEBI" id="CHEBI:28610"/>
        <dbReference type="ChEBI" id="CHEBI:30823"/>
        <dbReference type="ChEBI" id="CHEBI:74669"/>
    </reaction>
    <physiologicalReaction direction="left-to-right" evidence="1">
        <dbReference type="Rhea" id="RHEA:40924"/>
    </physiologicalReaction>
</comment>
<comment type="catalytic activity">
    <reaction evidence="2">
        <text>1-hexadecanoyl-2-(9Z,12Z-octadecadienoyl)-sn-glycero-3-phosphocholine + H2O = (9Z,12Z)-octadecadienoate + 1-hexadecanoyl-sn-glycero-3-phosphocholine + H(+)</text>
        <dbReference type="Rhea" id="RHEA:40811"/>
        <dbReference type="ChEBI" id="CHEBI:15377"/>
        <dbReference type="ChEBI" id="CHEBI:15378"/>
        <dbReference type="ChEBI" id="CHEBI:30245"/>
        <dbReference type="ChEBI" id="CHEBI:72998"/>
        <dbReference type="ChEBI" id="CHEBI:73002"/>
    </reaction>
    <physiologicalReaction direction="left-to-right" evidence="2">
        <dbReference type="Rhea" id="RHEA:40812"/>
    </physiologicalReaction>
</comment>
<comment type="catalytic activity">
    <reaction evidence="2">
        <text>1-hexadecanoyl-2-(9Z,12Z-octadecadienoyl)-sn-glycero-3-phosphocholine + H2O = 2-(9Z,12Z-octadecadienoyl)-sn-glycero-3-phosphocholine + hexadecanoate + H(+)</text>
        <dbReference type="Rhea" id="RHEA:40971"/>
        <dbReference type="ChEBI" id="CHEBI:7896"/>
        <dbReference type="ChEBI" id="CHEBI:15377"/>
        <dbReference type="ChEBI" id="CHEBI:15378"/>
        <dbReference type="ChEBI" id="CHEBI:73002"/>
        <dbReference type="ChEBI" id="CHEBI:76084"/>
    </reaction>
    <physiologicalReaction direction="left-to-right" evidence="2">
        <dbReference type="Rhea" id="RHEA:40972"/>
    </physiologicalReaction>
</comment>
<comment type="catalytic activity">
    <reaction evidence="1">
        <text>1-hexadecanoyl-2-(9Z-octadecenoyl)-sn-glycero-3-phosphoethanolamine + H2O = 1-hexadecanoyl-sn-glycero-3-phosphoethanolamine + (9Z)-octadecenoate + H(+)</text>
        <dbReference type="Rhea" id="RHEA:40911"/>
        <dbReference type="ChEBI" id="CHEBI:15377"/>
        <dbReference type="ChEBI" id="CHEBI:15378"/>
        <dbReference type="ChEBI" id="CHEBI:30823"/>
        <dbReference type="ChEBI" id="CHEBI:73004"/>
        <dbReference type="ChEBI" id="CHEBI:73007"/>
    </reaction>
    <physiologicalReaction direction="left-to-right" evidence="1">
        <dbReference type="Rhea" id="RHEA:40912"/>
    </physiologicalReaction>
</comment>
<comment type="catalytic activity">
    <reaction evidence="1">
        <text>1-hexadecanoyl-2-(9Z-octadecenoyl)-sn-glycero-3-phospho-(1'-sn-glycerol) + H2O = 1-hexadecanoyl-sn-glycero-3-phospho-(1'-sn-glycerol) + (9Z)-octadecenoate + H(+)</text>
        <dbReference type="Rhea" id="RHEA:40919"/>
        <dbReference type="ChEBI" id="CHEBI:15377"/>
        <dbReference type="ChEBI" id="CHEBI:15378"/>
        <dbReference type="ChEBI" id="CHEBI:30823"/>
        <dbReference type="ChEBI" id="CHEBI:72841"/>
        <dbReference type="ChEBI" id="CHEBI:75158"/>
    </reaction>
    <physiologicalReaction direction="left-to-right" evidence="1">
        <dbReference type="Rhea" id="RHEA:40920"/>
    </physiologicalReaction>
</comment>
<comment type="catalytic activity">
    <reaction evidence="2">
        <text>1,2-dihexadecanoyl-sn-glycero-3-phosphocholine + 2 H2O = sn-glycerol 3-phosphocholine + 2 hexadecanoate + 2 H(+)</text>
        <dbReference type="Rhea" id="RHEA:40975"/>
        <dbReference type="ChEBI" id="CHEBI:7896"/>
        <dbReference type="ChEBI" id="CHEBI:15377"/>
        <dbReference type="ChEBI" id="CHEBI:15378"/>
        <dbReference type="ChEBI" id="CHEBI:16870"/>
        <dbReference type="ChEBI" id="CHEBI:72999"/>
    </reaction>
    <physiologicalReaction direction="left-to-right" evidence="2">
        <dbReference type="Rhea" id="RHEA:40976"/>
    </physiologicalReaction>
</comment>
<comment type="catalytic activity">
    <reaction evidence="1">
        <text>1-O-hexadecyl-2-(9Z)-octadecenoyl-sn-glycero-3-phosphocholine + H2O = 1-O-hexadecyl-sn-glycero-3-phosphocholine + (9Z)-octadecenoate + H(+)</text>
        <dbReference type="Rhea" id="RHEA:40915"/>
        <dbReference type="ChEBI" id="CHEBI:15377"/>
        <dbReference type="ChEBI" id="CHEBI:15378"/>
        <dbReference type="ChEBI" id="CHEBI:30823"/>
        <dbReference type="ChEBI" id="CHEBI:34112"/>
        <dbReference type="ChEBI" id="CHEBI:64496"/>
    </reaction>
    <physiologicalReaction direction="left-to-right" evidence="1">
        <dbReference type="Rhea" id="RHEA:40916"/>
    </physiologicalReaction>
</comment>
<comment type="catalytic activity">
    <reaction evidence="1">
        <text>1-hexadecanoyl-sn-glycero-3-phosphocholine + H2O = sn-glycerol 3-phosphocholine + hexadecanoate + H(+)</text>
        <dbReference type="Rhea" id="RHEA:40435"/>
        <dbReference type="ChEBI" id="CHEBI:7896"/>
        <dbReference type="ChEBI" id="CHEBI:15377"/>
        <dbReference type="ChEBI" id="CHEBI:15378"/>
        <dbReference type="ChEBI" id="CHEBI:16870"/>
        <dbReference type="ChEBI" id="CHEBI:72998"/>
    </reaction>
    <physiologicalReaction direction="left-to-right" evidence="1">
        <dbReference type="Rhea" id="RHEA:40436"/>
    </physiologicalReaction>
</comment>
<comment type="catalytic activity">
    <reaction evidence="1">
        <text>1,2,3-tri-(9Z-octadecenoyl)-glycerol + H2O = di-(9Z)-octadecenoylglycerol + (9Z)-octadecenoate + H(+)</text>
        <dbReference type="Rhea" id="RHEA:38575"/>
        <dbReference type="ChEBI" id="CHEBI:15377"/>
        <dbReference type="ChEBI" id="CHEBI:15378"/>
        <dbReference type="ChEBI" id="CHEBI:30823"/>
        <dbReference type="ChEBI" id="CHEBI:53753"/>
        <dbReference type="ChEBI" id="CHEBI:75945"/>
    </reaction>
    <physiologicalReaction direction="left-to-right" evidence="1">
        <dbReference type="Rhea" id="RHEA:38576"/>
    </physiologicalReaction>
</comment>
<comment type="catalytic activity">
    <reaction evidence="1">
        <text>1-hexadecanoyl-2-(9Z)-octadecenoyl-3-octadecanoyl-sn-glycerol + H2O = 1-hexadecanoyl-2-(9Z-octadecenoyl)-sn-glycerol + octadecanoate + H(+)</text>
        <dbReference type="Rhea" id="RHEA:41111"/>
        <dbReference type="ChEBI" id="CHEBI:15377"/>
        <dbReference type="ChEBI" id="CHEBI:15378"/>
        <dbReference type="ChEBI" id="CHEBI:25629"/>
        <dbReference type="ChEBI" id="CHEBI:75466"/>
        <dbReference type="ChEBI" id="CHEBI:77623"/>
    </reaction>
    <physiologicalReaction direction="left-to-right" evidence="1">
        <dbReference type="Rhea" id="RHEA:41112"/>
    </physiologicalReaction>
</comment>
<comment type="catalytic activity">
    <reaction evidence="1">
        <text>1,3-dihexadecanoyl-2-(9Z-octadecenoyl)glycerol + H2O = 1,3-dihexadecanoylglycerol + (9Z)-octadecenoate + H(+)</text>
        <dbReference type="Rhea" id="RHEA:40983"/>
        <dbReference type="ChEBI" id="CHEBI:15377"/>
        <dbReference type="ChEBI" id="CHEBI:15378"/>
        <dbReference type="ChEBI" id="CHEBI:30823"/>
        <dbReference type="ChEBI" id="CHEBI:75688"/>
        <dbReference type="ChEBI" id="CHEBI:77619"/>
    </reaction>
    <physiologicalReaction direction="left-to-right" evidence="1">
        <dbReference type="Rhea" id="RHEA:40984"/>
    </physiologicalReaction>
</comment>
<comment type="catalytic activity">
    <reaction evidence="1">
        <text>1,3-dihexadecanoyl-2-(9Z-octadecenoyl)glycerol + H2O = 1-hexadecanoyl-2-(9Z-octadecenoyl)-glycerol + hexadecanoate + H(+)</text>
        <dbReference type="Rhea" id="RHEA:40979"/>
        <dbReference type="ChEBI" id="CHEBI:7896"/>
        <dbReference type="ChEBI" id="CHEBI:15377"/>
        <dbReference type="ChEBI" id="CHEBI:15378"/>
        <dbReference type="ChEBI" id="CHEBI:75585"/>
        <dbReference type="ChEBI" id="CHEBI:75688"/>
    </reaction>
    <physiologicalReaction direction="left-to-right" evidence="1">
        <dbReference type="Rhea" id="RHEA:40980"/>
    </physiologicalReaction>
</comment>
<comment type="catalytic activity">
    <reaction evidence="1">
        <text>1-hexadecanoyl-2-(9Z)-octadecenoyl-3-octadecanoyl-sn-glycerol + H2O = 1-hexadecanoyl-3-octadecanoyl-sn-glycerol + (9Z)-octadecenoate + H(+)</text>
        <dbReference type="Rhea" id="RHEA:41103"/>
        <dbReference type="ChEBI" id="CHEBI:15377"/>
        <dbReference type="ChEBI" id="CHEBI:15378"/>
        <dbReference type="ChEBI" id="CHEBI:30823"/>
        <dbReference type="ChEBI" id="CHEBI:77623"/>
        <dbReference type="ChEBI" id="CHEBI:77624"/>
    </reaction>
    <physiologicalReaction direction="left-to-right" evidence="1">
        <dbReference type="Rhea" id="RHEA:41104"/>
    </physiologicalReaction>
</comment>
<comment type="catalytic activity">
    <reaction evidence="1">
        <text>1-hexadecanoyl-2-(9Z)-octadecenoyl-3-octadecanoyl-sn-glycerol + H2O = 2-(9Z-octadecenoyl)-3-octadecanoyl-sn-glycerol + hexadecanoate + H(+)</text>
        <dbReference type="Rhea" id="RHEA:41107"/>
        <dbReference type="ChEBI" id="CHEBI:7896"/>
        <dbReference type="ChEBI" id="CHEBI:15377"/>
        <dbReference type="ChEBI" id="CHEBI:15378"/>
        <dbReference type="ChEBI" id="CHEBI:75558"/>
        <dbReference type="ChEBI" id="CHEBI:77623"/>
    </reaction>
    <physiologicalReaction direction="left-to-right" evidence="1">
        <dbReference type="Rhea" id="RHEA:41108"/>
    </physiologicalReaction>
</comment>
<comment type="catalytic activity">
    <reaction evidence="1">
        <text>1-octadecanoyl-2-(9Z,12Z)-octadecadienoyl-sn-glycerol + H2O = 1-octadecanoyl-sn-glycerol + (9Z,12Z)-octadecadienoate + H(+)</text>
        <dbReference type="Rhea" id="RHEA:40927"/>
        <dbReference type="ChEBI" id="CHEBI:15377"/>
        <dbReference type="ChEBI" id="CHEBI:15378"/>
        <dbReference type="ChEBI" id="CHEBI:30245"/>
        <dbReference type="ChEBI" id="CHEBI:75550"/>
        <dbReference type="ChEBI" id="CHEBI:77097"/>
    </reaction>
    <physiologicalReaction direction="left-to-right" evidence="1">
        <dbReference type="Rhea" id="RHEA:40928"/>
    </physiologicalReaction>
</comment>
<comment type="catalytic activity">
    <reaction evidence="1">
        <text>1,2-di-(9Z-octadecenoyl)-sn-glycerol + H2O = 1-(9Z-octadecenoyl)-sn-glycerol + (9Z)-octadecenoate + H(+)</text>
        <dbReference type="Rhea" id="RHEA:41219"/>
        <dbReference type="ChEBI" id="CHEBI:15377"/>
        <dbReference type="ChEBI" id="CHEBI:15378"/>
        <dbReference type="ChEBI" id="CHEBI:30823"/>
        <dbReference type="ChEBI" id="CHEBI:52333"/>
        <dbReference type="ChEBI" id="CHEBI:75757"/>
    </reaction>
    <physiologicalReaction direction="left-to-right" evidence="1">
        <dbReference type="Rhea" id="RHEA:41220"/>
    </physiologicalReaction>
</comment>
<comment type="catalytic activity">
    <reaction evidence="1">
        <text>2,3-di-(9Z)-octadecenoyl-sn-glycerol + H2O = 3-(9Z-octadecenoyl)-sn-glycerol + (9Z)-octadecenoate + H(+)</text>
        <dbReference type="Rhea" id="RHEA:42604"/>
        <dbReference type="ChEBI" id="CHEBI:15377"/>
        <dbReference type="ChEBI" id="CHEBI:15378"/>
        <dbReference type="ChEBI" id="CHEBI:30823"/>
        <dbReference type="ChEBI" id="CHEBI:75824"/>
        <dbReference type="ChEBI" id="CHEBI:75938"/>
    </reaction>
    <physiologicalReaction direction="left-to-right" evidence="1">
        <dbReference type="Rhea" id="RHEA:42605"/>
    </physiologicalReaction>
</comment>
<comment type="catalytic activity">
    <reaction evidence="2">
        <text>1,3-di-(9Z-octadecenoyl)-glycerol + H2O = 1-(9Z-octadecenoyl)-glycerol + (9Z)-octadecenoate + H(+)</text>
        <dbReference type="Rhea" id="RHEA:39939"/>
        <dbReference type="ChEBI" id="CHEBI:15377"/>
        <dbReference type="ChEBI" id="CHEBI:15378"/>
        <dbReference type="ChEBI" id="CHEBI:30823"/>
        <dbReference type="ChEBI" id="CHEBI:75342"/>
        <dbReference type="ChEBI" id="CHEBI:75735"/>
    </reaction>
    <physiologicalReaction direction="left-to-right" evidence="2">
        <dbReference type="Rhea" id="RHEA:39940"/>
    </physiologicalReaction>
</comment>
<comment type="catalytic activity">
    <reaction evidence="2">
        <text>1-(9Z-octadecenoyl)-glycerol + H2O = glycerol + (9Z)-octadecenoate + H(+)</text>
        <dbReference type="Rhea" id="RHEA:38487"/>
        <dbReference type="ChEBI" id="CHEBI:15377"/>
        <dbReference type="ChEBI" id="CHEBI:15378"/>
        <dbReference type="ChEBI" id="CHEBI:17754"/>
        <dbReference type="ChEBI" id="CHEBI:30823"/>
        <dbReference type="ChEBI" id="CHEBI:75342"/>
    </reaction>
    <physiologicalReaction direction="left-to-right" evidence="2">
        <dbReference type="Rhea" id="RHEA:38488"/>
    </physiologicalReaction>
</comment>
<comment type="catalytic activity">
    <reaction evidence="2">
        <text>2-(9Z-octadecenoyl)-glycerol + H2O = glycerol + (9Z)-octadecenoate + H(+)</text>
        <dbReference type="Rhea" id="RHEA:38491"/>
        <dbReference type="ChEBI" id="CHEBI:15377"/>
        <dbReference type="ChEBI" id="CHEBI:15378"/>
        <dbReference type="ChEBI" id="CHEBI:17754"/>
        <dbReference type="ChEBI" id="CHEBI:30823"/>
        <dbReference type="ChEBI" id="CHEBI:73990"/>
    </reaction>
    <physiologicalReaction direction="left-to-right" evidence="2">
        <dbReference type="Rhea" id="RHEA:38492"/>
    </physiologicalReaction>
</comment>
<comment type="subcellular location">
    <subcellularLocation>
        <location evidence="1">Apical cell membrane</location>
        <topology evidence="3">Single-pass type I membrane protein</topology>
    </subcellularLocation>
    <text evidence="1">Present in the intestinal brush border membranes.</text>
</comment>
<comment type="alternative products">
    <event type="alternative splicing"/>
    <isoform>
        <id>Q3TTY0-1</id>
        <name>1</name>
        <sequence type="displayed"/>
    </isoform>
    <isoform>
        <id>Q3TTY0-2</id>
        <name>2</name>
        <sequence type="described" ref="VSP_032235 VSP_032236"/>
    </isoform>
    <isoform>
        <id>Q3TTY0-3</id>
        <name>3</name>
        <sequence type="described" ref="VSP_032237 VSP_032238"/>
    </isoform>
    <isoform>
        <id>Q3TTY0-4</id>
        <name>4</name>
        <sequence type="described" ref="VSP_032233 VSP_032234"/>
    </isoform>
</comment>
<comment type="domain">
    <text evidence="1">Repeat 2 contains the catalytic domain.</text>
</comment>
<comment type="PTM">
    <text evidence="1">Undergoes proteolytic cleavage in the ileum.</text>
</comment>
<comment type="similarity">
    <text evidence="8">Belongs to the 'GDSL' lipolytic enzyme family. Phospholipase B1 subfamily.</text>
</comment>
<comment type="sequence caution" evidence="8">
    <conflict type="erroneous initiation">
        <sequence resource="EMBL-CDS" id="AAI19078"/>
    </conflict>
</comment>
<keyword id="KW-0025">Alternative splicing</keyword>
<keyword id="KW-1003">Cell membrane</keyword>
<keyword id="KW-0325">Glycoprotein</keyword>
<keyword id="KW-0378">Hydrolase</keyword>
<keyword id="KW-0443">Lipid metabolism</keyword>
<keyword id="KW-0472">Membrane</keyword>
<keyword id="KW-1208">Phospholipid metabolism</keyword>
<keyword id="KW-1185">Reference proteome</keyword>
<keyword id="KW-0677">Repeat</keyword>
<keyword id="KW-0732">Signal</keyword>
<keyword id="KW-0812">Transmembrane</keyword>
<keyword id="KW-1133">Transmembrane helix</keyword>
<feature type="signal peptide" evidence="3">
    <location>
        <begin position="1"/>
        <end position="27"/>
    </location>
</feature>
<feature type="chain" id="PRO_0000324385" description="Phospholipase B1, membrane-associated">
    <location>
        <begin position="28"/>
        <end position="1478"/>
    </location>
</feature>
<feature type="topological domain" description="Extracellular" evidence="3">
    <location>
        <begin position="28"/>
        <end position="1422"/>
    </location>
</feature>
<feature type="transmembrane region" description="Helical" evidence="3">
    <location>
        <begin position="1423"/>
        <end position="1443"/>
    </location>
</feature>
<feature type="topological domain" description="Cytoplasmic" evidence="3">
    <location>
        <begin position="1444"/>
        <end position="1478"/>
    </location>
</feature>
<feature type="repeat" description="1" evidence="3">
    <location>
        <begin position="43"/>
        <end position="351"/>
    </location>
</feature>
<feature type="repeat" description="2" evidence="3">
    <location>
        <begin position="366"/>
        <end position="711"/>
    </location>
</feature>
<feature type="repeat" description="3" evidence="3">
    <location>
        <begin position="712"/>
        <end position="1058"/>
    </location>
</feature>
<feature type="repeat" description="4" evidence="3">
    <location>
        <begin position="1068"/>
        <end position="1407"/>
    </location>
</feature>
<feature type="region of interest" description="4 X 308-326 AA approximate repeats" evidence="3">
    <location>
        <begin position="43"/>
        <end position="1407"/>
    </location>
</feature>
<feature type="region of interest" description="Necessary for membrane localization" evidence="1">
    <location>
        <begin position="1408"/>
        <end position="1450"/>
    </location>
</feature>
<feature type="region of interest" description="Disordered" evidence="5">
    <location>
        <begin position="1451"/>
        <end position="1478"/>
    </location>
</feature>
<feature type="compositionally biased region" description="Polar residues" evidence="5">
    <location>
        <begin position="1459"/>
        <end position="1468"/>
    </location>
</feature>
<feature type="compositionally biased region" description="Basic and acidic residues" evidence="5">
    <location>
        <begin position="1469"/>
        <end position="1478"/>
    </location>
</feature>
<feature type="active site" evidence="1">
    <location>
        <position position="404"/>
    </location>
</feature>
<feature type="active site" evidence="1">
    <location>
        <position position="518"/>
    </location>
</feature>
<feature type="active site" evidence="1">
    <location>
        <position position="659"/>
    </location>
</feature>
<feature type="glycosylation site" description="N-linked (GlcNAc...) asparagine" evidence="4">
    <location>
        <position position="180"/>
    </location>
</feature>
<feature type="glycosylation site" description="N-linked (GlcNAc...) asparagine" evidence="4">
    <location>
        <position position="525"/>
    </location>
</feature>
<feature type="glycosylation site" description="N-linked (GlcNAc...) asparagine" evidence="4">
    <location>
        <position position="626"/>
    </location>
</feature>
<feature type="glycosylation site" description="N-linked (GlcNAc...) asparagine" evidence="4">
    <location>
        <position position="637"/>
    </location>
</feature>
<feature type="glycosylation site" description="N-linked (GlcNAc...) asparagine" evidence="4">
    <location>
        <position position="715"/>
    </location>
</feature>
<feature type="glycosylation site" description="N-linked (GlcNAc...) asparagine" evidence="4">
    <location>
        <position position="764"/>
    </location>
</feature>
<feature type="glycosylation site" description="N-linked (GlcNAc...) asparagine" evidence="4">
    <location>
        <position position="787"/>
    </location>
</feature>
<feature type="glycosylation site" description="N-linked (GlcNAc...) asparagine" evidence="4">
    <location>
        <position position="801"/>
    </location>
</feature>
<feature type="glycosylation site" description="N-linked (GlcNAc...) asparagine" evidence="4">
    <location>
        <position position="830"/>
    </location>
</feature>
<feature type="glycosylation site" description="N-linked (GlcNAc...) asparagine" evidence="4">
    <location>
        <position position="926"/>
    </location>
</feature>
<feature type="glycosylation site" description="N-linked (GlcNAc...) asparagine" evidence="4">
    <location>
        <position position="1227"/>
    </location>
</feature>
<feature type="glycosylation site" description="N-linked (GlcNAc...) asparagine" evidence="4">
    <location>
        <position position="1280"/>
    </location>
</feature>
<feature type="glycosylation site" description="N-linked (GlcNAc...) asparagine" evidence="4">
    <location>
        <position position="1289"/>
    </location>
</feature>
<feature type="glycosylation site" description="N-linked (GlcNAc...) asparagine" evidence="4">
    <location>
        <position position="1387"/>
    </location>
</feature>
<feature type="splice variant" id="VSP_032233" description="In isoform 4." evidence="7">
    <original>VHSLRPAD</original>
    <variation>GTWLSCSV</variation>
    <location>
        <begin position="387"/>
        <end position="394"/>
    </location>
</feature>
<feature type="splice variant" id="VSP_032234" description="In isoform 4." evidence="7">
    <location>
        <begin position="395"/>
        <end position="1478"/>
    </location>
</feature>
<feature type="splice variant" id="VSP_032235" description="In isoform 2." evidence="7">
    <original>S</original>
    <variation>R</variation>
    <location>
        <position position="778"/>
    </location>
</feature>
<feature type="splice variant" id="VSP_032236" description="In isoform 2." evidence="7">
    <location>
        <begin position="779"/>
        <end position="1478"/>
    </location>
</feature>
<feature type="splice variant" id="VSP_032237" description="In isoform 3." evidence="6">
    <original>S</original>
    <variation>R</variation>
    <location>
        <position position="929"/>
    </location>
</feature>
<feature type="splice variant" id="VSP_032238" description="In isoform 3." evidence="6">
    <location>
        <begin position="930"/>
        <end position="1478"/>
    </location>
</feature>
<organism>
    <name type="scientific">Mus musculus</name>
    <name type="common">Mouse</name>
    <dbReference type="NCBI Taxonomy" id="10090"/>
    <lineage>
        <taxon>Eukaryota</taxon>
        <taxon>Metazoa</taxon>
        <taxon>Chordata</taxon>
        <taxon>Craniata</taxon>
        <taxon>Vertebrata</taxon>
        <taxon>Euteleostomi</taxon>
        <taxon>Mammalia</taxon>
        <taxon>Eutheria</taxon>
        <taxon>Euarchontoglires</taxon>
        <taxon>Glires</taxon>
        <taxon>Rodentia</taxon>
        <taxon>Myomorpha</taxon>
        <taxon>Muroidea</taxon>
        <taxon>Muridae</taxon>
        <taxon>Murinae</taxon>
        <taxon>Mus</taxon>
        <taxon>Mus</taxon>
    </lineage>
</organism>
<name>PLB1_MOUSE</name>
<sequence length="1478" mass="164541">MELYPGVSPVGLLLLLLLGQGPSQIHGSSGENTLAWQSQQVFWTLKNFPFPCKPKKLELSVLSESVHSLRPSDIKLVAAIGNPEIPLAPGSGTINMEKPQSIKNQPQDVCMGIMTVLSDIIRHFSPSVLMPTCSPGKGTAVHTTAEDLWIQAKELVRRLKDNPQLDFEKDWKLITVFFSNTSQCHLCPSAQQKSHLMRHMEMLWGVLDYLHHEVPRAFVNLVDLSEVLAMDLQHQETGFSPAPEVCKCTETTTLSKAVMQWSYQEAWEDLLASSKFNKHETFAVVFQPFFDEIEPPLKRSSPQDPTTLALRIWNSMMEPVGQKDGLLNTAERKTMKCPSEESPYLFTYKNSNYQARRLKPITKLQMKEGSEFTCPDKNPSNSIPTTVHSLRPADIKIIGALGDSLTAGNGAGASPWNILDVLTEYRGLSWSVGGDETIKTVTTLPNILREFNPSLKGFSVGTGKESTSRASFNQAVAGAKSDGLAGQARKLVDLMKADKTINFQEDWKIITVFIGGNDLCASCSNSTRFSPQNFIDNIKNALDILHAEVPRAFVNMAMVMEITPLRELFNEPTVSCPRNILSRLCPCVLGLGDNSEELSSLVQRNRDYQKKTEELINSGRYDTRDNFTVVVQPLFENVSMPRTPEGVPDKSFFAPDCFHFNAKTHARSAIALWKNMLEPVGHKTRHNNFEIKAPIVCPNQASPFLSTTKNSNLGNGTWMVCEERAPSASPPTSVHTLRPADIQVVAALGDSLTAGNGISSQEGNLTDVSTQYRGLSYSAGGDKTLENVTTLPNILRKFNGNLTGYSVGTGDSSSANAFLNQAVPGAKAENLTSQVRTLVQKMKSDNRVNFNRDWKVITVMIGASDLCDFCTDSNHYSAANFFDHLQNALDILHKEVPRALVNLVDFINPSIIREVFLKNPDKCPVNQSSVLCNCVLTPRKDSYELARLEAFTKSYQSSMLQLVESGRYDTREDFSVVLQPFLLNTKLPVLENGKPDTSFFAPDCIHLNQKFHTQLARALWANMLEPLGKKTDTLDPKGHISLACPTKDQPFLRTFRNSNYKYPTKPAIENWGSDFLCTEKSPSSQVPTSVHELRPADIKVVAAMGDFLTTATGARPSGYKRLATPWRGLSWSIGGDGKLETHTTLPNILKKFNPSITGFSTGTLDNKAGLNVAEEGARAQDMPAQAKTLVKKMKSTPTINLQEDWKLITLLIGNNDLCLYCENPEDNSTKEYVKYIQQALDILYEELPRVFINVVEVMELAGLHHVQGGKCAMPLAVQKNCSCLRHSQNLTAMQELKKLNWNLQSGISELSYWHRYMEREDFAVTVQPFFRNTFIPLNEREGLDLTFFSEDCFYFSDRGHAEMAIALWNNMLEPVGWKTSSNNFIYNRTKLKCPSPERPFLYTLRNSQLLPDKAEEPSNALYWAVPVAAIGGLAVGILGVMLWRTVKPVQQEEEEEDTLPNTSVTQDAVSEKRLKAGN</sequence>
<evidence type="ECO:0000250" key="1">
    <source>
        <dbReference type="UniProtKB" id="O54728"/>
    </source>
</evidence>
<evidence type="ECO:0000250" key="2">
    <source>
        <dbReference type="UniProtKB" id="Q05017"/>
    </source>
</evidence>
<evidence type="ECO:0000255" key="3"/>
<evidence type="ECO:0000255" key="4">
    <source>
        <dbReference type="PROSITE-ProRule" id="PRU00498"/>
    </source>
</evidence>
<evidence type="ECO:0000256" key="5">
    <source>
        <dbReference type="SAM" id="MobiDB-lite"/>
    </source>
</evidence>
<evidence type="ECO:0000303" key="6">
    <source>
    </source>
</evidence>
<evidence type="ECO:0000303" key="7">
    <source>
    </source>
</evidence>
<evidence type="ECO:0000305" key="8"/>